<gene>
    <name evidence="1" type="primary">yidC1</name>
    <name type="ordered locus">lp_1553</name>
</gene>
<feature type="signal peptide" evidence="1">
    <location>
        <begin position="1"/>
        <end position="22"/>
    </location>
</feature>
<feature type="chain" id="PRO_0000020384" description="Membrane protein insertase YidC 1">
    <location>
        <begin position="23"/>
        <end position="307"/>
    </location>
</feature>
<feature type="transmembrane region" description="Helical" evidence="1">
    <location>
        <begin position="59"/>
        <end position="79"/>
    </location>
</feature>
<feature type="transmembrane region" description="Helical" evidence="1">
    <location>
        <begin position="136"/>
        <end position="156"/>
    </location>
</feature>
<feature type="transmembrane region" description="Helical" evidence="1">
    <location>
        <begin position="177"/>
        <end position="197"/>
    </location>
</feature>
<feature type="transmembrane region" description="Helical" evidence="1">
    <location>
        <begin position="205"/>
        <end position="225"/>
    </location>
</feature>
<feature type="transmembrane region" description="Helical" evidence="1">
    <location>
        <begin position="226"/>
        <end position="246"/>
    </location>
</feature>
<feature type="region of interest" description="Disordered" evidence="2">
    <location>
        <begin position="260"/>
        <end position="307"/>
    </location>
</feature>
<feature type="lipid moiety-binding region" description="N-palmitoyl cysteine" evidence="1">
    <location>
        <position position="23"/>
    </location>
</feature>
<feature type="lipid moiety-binding region" description="S-diacylglycerol cysteine" evidence="1">
    <location>
        <position position="23"/>
    </location>
</feature>
<evidence type="ECO:0000255" key="1">
    <source>
        <dbReference type="HAMAP-Rule" id="MF_01811"/>
    </source>
</evidence>
<evidence type="ECO:0000256" key="2">
    <source>
        <dbReference type="SAM" id="MobiDB-lite"/>
    </source>
</evidence>
<comment type="function">
    <text evidence="1">Required for the insertion and/or proper folding and/or complex formation of integral membrane proteins into the membrane. Involved in integration of membrane proteins that insert both dependently and independently of the Sec translocase complex, as well as at least some lipoproteins.</text>
</comment>
<comment type="subcellular location">
    <subcellularLocation>
        <location evidence="1">Cell membrane</location>
        <topology evidence="1">Multi-pass membrane protein</topology>
    </subcellularLocation>
</comment>
<comment type="similarity">
    <text evidence="1">Belongs to the OXA1/ALB3/YidC family. Type 2 subfamily.</text>
</comment>
<protein>
    <recommendedName>
        <fullName evidence="1">Membrane protein insertase YidC 1</fullName>
    </recommendedName>
    <alternativeName>
        <fullName evidence="1">Foldase YidC 1</fullName>
    </alternativeName>
    <alternativeName>
        <fullName evidence="1">Membrane integrase YidC 1</fullName>
    </alternativeName>
    <alternativeName>
        <fullName evidence="1">Membrane protein YidC 1</fullName>
    </alternativeName>
</protein>
<name>YIDC1_LACPL</name>
<sequence>MKSKKGLTLTITLGTLALFLSGCVQTTKAGKPYGFVYEYLAKPGQNVMEWLSQLFGNNYGWAIIGLTVIVRLVLLPMMINQQRKSTYQQEKMSAVRPQMEKIQARQKAATTQEEKAAISNELMQLYRDNGISMTGGIGCLPLLIQLPIFSALYYAIRYSPELSKATFMGISLGKSSLILAILAFLSYLAQGYLSMIGLPEEQKKTMRLMLIMSPVMILFVSMSAPAGLGLYFFVGGLFACLQTLIINFFRPRIRREVEAELKKHPIKTPTPTQPKPINATESKPSHPRPQNNAGRGRNAGKQQRHHK</sequence>
<reference key="1">
    <citation type="journal article" date="2003" name="Proc. Natl. Acad. Sci. U.S.A.">
        <title>Complete genome sequence of Lactobacillus plantarum WCFS1.</title>
        <authorList>
            <person name="Kleerebezem M."/>
            <person name="Boekhorst J."/>
            <person name="van Kranenburg R."/>
            <person name="Molenaar D."/>
            <person name="Kuipers O.P."/>
            <person name="Leer R."/>
            <person name="Tarchini R."/>
            <person name="Peters S.A."/>
            <person name="Sandbrink H.M."/>
            <person name="Fiers M.W.E.J."/>
            <person name="Stiekema W."/>
            <person name="Klein Lankhorst R.M."/>
            <person name="Bron P.A."/>
            <person name="Hoffer S.M."/>
            <person name="Nierop Groot M.N."/>
            <person name="Kerkhoven R."/>
            <person name="De Vries M."/>
            <person name="Ursing B."/>
            <person name="De Vos W.M."/>
            <person name="Siezen R.J."/>
        </authorList>
    </citation>
    <scope>NUCLEOTIDE SEQUENCE [LARGE SCALE GENOMIC DNA]</scope>
    <source>
        <strain>ATCC BAA-793 / NCIMB 8826 / WCFS1</strain>
    </source>
</reference>
<reference key="2">
    <citation type="journal article" date="2012" name="J. Bacteriol.">
        <title>Complete resequencing and reannotation of the Lactobacillus plantarum WCFS1 genome.</title>
        <authorList>
            <person name="Siezen R.J."/>
            <person name="Francke C."/>
            <person name="Renckens B."/>
            <person name="Boekhorst J."/>
            <person name="Wels M."/>
            <person name="Kleerebezem M."/>
            <person name="van Hijum S.A."/>
        </authorList>
    </citation>
    <scope>NUCLEOTIDE SEQUENCE [LARGE SCALE GENOMIC DNA]</scope>
    <scope>GENOME REANNOTATION</scope>
    <source>
        <strain>ATCC BAA-793 / NCIMB 8826 / WCFS1</strain>
    </source>
</reference>
<organism>
    <name type="scientific">Lactiplantibacillus plantarum (strain ATCC BAA-793 / NCIMB 8826 / WCFS1)</name>
    <name type="common">Lactobacillus plantarum</name>
    <dbReference type="NCBI Taxonomy" id="220668"/>
    <lineage>
        <taxon>Bacteria</taxon>
        <taxon>Bacillati</taxon>
        <taxon>Bacillota</taxon>
        <taxon>Bacilli</taxon>
        <taxon>Lactobacillales</taxon>
        <taxon>Lactobacillaceae</taxon>
        <taxon>Lactiplantibacillus</taxon>
    </lineage>
</organism>
<accession>Q88WR8</accession>
<accession>F9UNT3</accession>
<dbReference type="EMBL" id="AL935263">
    <property type="protein sequence ID" value="CCC78872.1"/>
    <property type="molecule type" value="Genomic_DNA"/>
</dbReference>
<dbReference type="RefSeq" id="YP_004889386.1">
    <property type="nucleotide sequence ID" value="NC_004567.2"/>
</dbReference>
<dbReference type="SMR" id="Q88WR8"/>
<dbReference type="STRING" id="220668.lp_1553"/>
<dbReference type="EnsemblBacteria" id="CCC78872">
    <property type="protein sequence ID" value="CCC78872"/>
    <property type="gene ID" value="lp_1553"/>
</dbReference>
<dbReference type="KEGG" id="lpl:lp_1553"/>
<dbReference type="PATRIC" id="fig|220668.9.peg.1306"/>
<dbReference type="eggNOG" id="COG0706">
    <property type="taxonomic scope" value="Bacteria"/>
</dbReference>
<dbReference type="HOGENOM" id="CLU_036138_5_1_9"/>
<dbReference type="OrthoDB" id="9780552at2"/>
<dbReference type="PhylomeDB" id="Q88WR8"/>
<dbReference type="Proteomes" id="UP000000432">
    <property type="component" value="Chromosome"/>
</dbReference>
<dbReference type="GO" id="GO:0005886">
    <property type="term" value="C:plasma membrane"/>
    <property type="evidence" value="ECO:0007669"/>
    <property type="project" value="UniProtKB-SubCell"/>
</dbReference>
<dbReference type="GO" id="GO:0032977">
    <property type="term" value="F:membrane insertase activity"/>
    <property type="evidence" value="ECO:0007669"/>
    <property type="project" value="InterPro"/>
</dbReference>
<dbReference type="GO" id="GO:0051205">
    <property type="term" value="P:protein insertion into membrane"/>
    <property type="evidence" value="ECO:0007669"/>
    <property type="project" value="TreeGrafter"/>
</dbReference>
<dbReference type="GO" id="GO:0015031">
    <property type="term" value="P:protein transport"/>
    <property type="evidence" value="ECO:0007669"/>
    <property type="project" value="UniProtKB-KW"/>
</dbReference>
<dbReference type="CDD" id="cd20070">
    <property type="entry name" value="5TM_YidC_Alb3"/>
    <property type="match status" value="1"/>
</dbReference>
<dbReference type="HAMAP" id="MF_01811">
    <property type="entry name" value="YidC_type2"/>
    <property type="match status" value="1"/>
</dbReference>
<dbReference type="InterPro" id="IPR001708">
    <property type="entry name" value="YidC/ALB3/OXA1/COX18"/>
</dbReference>
<dbReference type="InterPro" id="IPR028055">
    <property type="entry name" value="YidC/Oxa/ALB_C"/>
</dbReference>
<dbReference type="InterPro" id="IPR023060">
    <property type="entry name" value="YidC/YidC1/YidC2_Firmicutes"/>
</dbReference>
<dbReference type="InterPro" id="IPR047196">
    <property type="entry name" value="YidC_ALB_C"/>
</dbReference>
<dbReference type="NCBIfam" id="TIGR03592">
    <property type="entry name" value="yidC_oxa1_cterm"/>
    <property type="match status" value="1"/>
</dbReference>
<dbReference type="PANTHER" id="PTHR12428:SF65">
    <property type="entry name" value="CYTOCHROME C OXIDASE ASSEMBLY PROTEIN COX18, MITOCHONDRIAL"/>
    <property type="match status" value="1"/>
</dbReference>
<dbReference type="PANTHER" id="PTHR12428">
    <property type="entry name" value="OXA1"/>
    <property type="match status" value="1"/>
</dbReference>
<dbReference type="Pfam" id="PF02096">
    <property type="entry name" value="60KD_IMP"/>
    <property type="match status" value="1"/>
</dbReference>
<dbReference type="PRINTS" id="PR00701">
    <property type="entry name" value="60KDINNERMP"/>
</dbReference>
<dbReference type="PROSITE" id="PS51257">
    <property type="entry name" value="PROKAR_LIPOPROTEIN"/>
    <property type="match status" value="1"/>
</dbReference>
<keyword id="KW-1003">Cell membrane</keyword>
<keyword id="KW-0143">Chaperone</keyword>
<keyword id="KW-0449">Lipoprotein</keyword>
<keyword id="KW-0472">Membrane</keyword>
<keyword id="KW-0564">Palmitate</keyword>
<keyword id="KW-0653">Protein transport</keyword>
<keyword id="KW-1185">Reference proteome</keyword>
<keyword id="KW-0732">Signal</keyword>
<keyword id="KW-0812">Transmembrane</keyword>
<keyword id="KW-1133">Transmembrane helix</keyword>
<keyword id="KW-0813">Transport</keyword>
<proteinExistence type="inferred from homology"/>